<evidence type="ECO:0000269" key="1">
    <source>
    </source>
</evidence>
<evidence type="ECO:0000303" key="2">
    <source>
    </source>
</evidence>
<evidence type="ECO:0000305" key="3"/>
<evidence type="ECO:0000305" key="4">
    <source>
    </source>
</evidence>
<proteinExistence type="evidence at protein level"/>
<protein>
    <recommendedName>
        <fullName evidence="2">Frenatin-1</fullName>
    </recommendedName>
</protein>
<dbReference type="GO" id="GO:0005576">
    <property type="term" value="C:extracellular region"/>
    <property type="evidence" value="ECO:0007669"/>
    <property type="project" value="UniProtKB-SubCell"/>
</dbReference>
<dbReference type="GO" id="GO:0042742">
    <property type="term" value="P:defense response to bacterium"/>
    <property type="evidence" value="ECO:0007669"/>
    <property type="project" value="UniProtKB-KW"/>
</dbReference>
<dbReference type="GO" id="GO:0045087">
    <property type="term" value="P:innate immune response"/>
    <property type="evidence" value="ECO:0007669"/>
    <property type="project" value="UniProtKB-KW"/>
</dbReference>
<organism>
    <name type="scientific">Nyctimystes infrafrenatus</name>
    <name type="common">White-lipped tree frog</name>
    <name type="synonym">Litoria infrafrenata</name>
    <dbReference type="NCBI Taxonomy" id="61195"/>
    <lineage>
        <taxon>Eukaryota</taxon>
        <taxon>Metazoa</taxon>
        <taxon>Chordata</taxon>
        <taxon>Craniata</taxon>
        <taxon>Vertebrata</taxon>
        <taxon>Euteleostomi</taxon>
        <taxon>Amphibia</taxon>
        <taxon>Batrachia</taxon>
        <taxon>Anura</taxon>
        <taxon>Neobatrachia</taxon>
        <taxon>Hyloidea</taxon>
        <taxon>Hylidae</taxon>
        <taxon>Pelodryadinae</taxon>
        <taxon>Nyctimystes</taxon>
    </lineage>
</organism>
<feature type="peptide" id="PRO_0000043798" description="Frenatin-1" evidence="1">
    <location>
        <begin position="1"/>
        <end position="12"/>
    </location>
</feature>
<feature type="modified residue" description="Leucine amide" evidence="1">
    <location>
        <position position="12"/>
    </location>
</feature>
<keyword id="KW-0027">Amidation</keyword>
<keyword id="KW-0878">Amphibian defense peptide</keyword>
<keyword id="KW-0044">Antibiotic</keyword>
<keyword id="KW-0929">Antimicrobial</keyword>
<keyword id="KW-0903">Direct protein sequencing</keyword>
<keyword id="KW-0391">Immunity</keyword>
<keyword id="KW-0399">Innate immunity</keyword>
<keyword id="KW-0964">Secreted</keyword>
<accession>P82021</accession>
<comment type="function">
    <text evidence="1">Antimicrobial peptide with selective activity. Is only active against Micrococcus luteus (MIC=25 ug/ml) and not against Bacillus cereus, Escherichia coli, Leuconostoc mesenteroides, Micrococcus luteus, Pastewella haemolytica, Staphylococcus aureus, Streptococcus faecalis and Streptococcus uberis.</text>
</comment>
<comment type="subcellular location">
    <subcellularLocation>
        <location evidence="1">Secreted</location>
    </subcellularLocation>
</comment>
<comment type="tissue specificity">
    <text evidence="4">Expressed by the skin glands.</text>
</comment>
<comment type="mass spectrometry"/>
<comment type="similarity">
    <text evidence="3">Belongs to the frog skin active peptide (FSAP) family. Frenatin subfamily.</text>
</comment>
<comment type="online information" name="The antimicrobial peptide database">
    <link uri="https://wangapd3.com/database/query_output.php?ID=02006"/>
</comment>
<reference key="1">
    <citation type="journal article" date="1996" name="J. Pept. Sci.">
        <title>The structures of the frenatin peptides from the skin secretion of the giant tree frog Litoria infrafrenata.</title>
        <authorList>
            <person name="Raftery M.J."/>
            <person name="Waugh R.J."/>
            <person name="Bowie J.H."/>
            <person name="Wallace J.C."/>
            <person name="Tyler M.J."/>
        </authorList>
    </citation>
    <scope>PROTEIN SEQUENCE</scope>
    <scope>FUNCTION</scope>
    <scope>AMIDATION AT LEU-12</scope>
    <scope>MASS SPECTROMETRY</scope>
    <scope>SUBCELLULAR LOCATION</scope>
    <scope>SYNTHESIS</scope>
    <source>
        <tissue>Skin secretion</tissue>
    </source>
</reference>
<name>FRE1_NYCIN</name>
<sequence>GLLDALSGILGL</sequence>